<feature type="chain" id="PRO_0000114203" description="Chromosomal replication initiator protein DnaA">
    <location>
        <begin position="1"/>
        <end position="451"/>
    </location>
</feature>
<feature type="region of interest" description="Domain I, interacts with DnaA modulators" evidence="1">
    <location>
        <begin position="1"/>
        <end position="72"/>
    </location>
</feature>
<feature type="region of interest" description="Domain II" evidence="1">
    <location>
        <begin position="72"/>
        <end position="108"/>
    </location>
</feature>
<feature type="region of interest" description="Domain III, AAA+ region" evidence="1">
    <location>
        <begin position="109"/>
        <end position="325"/>
    </location>
</feature>
<feature type="region of interest" description="Domain IV, binds dsDNA" evidence="1">
    <location>
        <begin position="326"/>
        <end position="451"/>
    </location>
</feature>
<feature type="binding site" evidence="1">
    <location>
        <position position="153"/>
    </location>
    <ligand>
        <name>ATP</name>
        <dbReference type="ChEBI" id="CHEBI:30616"/>
    </ligand>
</feature>
<feature type="binding site" evidence="1">
    <location>
        <position position="155"/>
    </location>
    <ligand>
        <name>ATP</name>
        <dbReference type="ChEBI" id="CHEBI:30616"/>
    </ligand>
</feature>
<feature type="binding site" evidence="1">
    <location>
        <position position="156"/>
    </location>
    <ligand>
        <name>ATP</name>
        <dbReference type="ChEBI" id="CHEBI:30616"/>
    </ligand>
</feature>
<feature type="binding site" evidence="1">
    <location>
        <position position="157"/>
    </location>
    <ligand>
        <name>ATP</name>
        <dbReference type="ChEBI" id="CHEBI:30616"/>
    </ligand>
</feature>
<comment type="function">
    <text evidence="1">Plays an essential role in the initiation and regulation of chromosomal replication. ATP-DnaA binds to the origin of replication (oriC) to initiate formation of the DNA replication initiation complex once per cell cycle. Binds the DnaA box (a 9 base pair repeat at the origin) and separates the double-stranded (ds)DNA. Forms a right-handed helical filament on oriC DNA; dsDNA binds to the exterior of the filament while single-stranded (ss)DNA is stabiized in the filament's interior. The ATP-DnaA-oriC complex binds and stabilizes one strand of the AT-rich DNA unwinding element (DUE), permitting loading of DNA polymerase. After initiation quickly degrades to an ADP-DnaA complex that is not apt for DNA replication. Binds acidic phospholipids.</text>
</comment>
<comment type="function">
    <text evidence="2">Strand separation requires the DnaA boxes and adjacent DnaA-trio motifs as well as ATP.</text>
</comment>
<comment type="subunit">
    <text evidence="1">Oligomerizes as a right-handed, spiral filament on DNA at oriC.</text>
</comment>
<comment type="subcellular location">
    <subcellularLocation>
        <location evidence="1">Cytoplasm</location>
    </subcellularLocation>
</comment>
<comment type="domain">
    <text evidence="1">Domain I is involved in oligomerization and binding regulators, domain II is flexibile and of varying length in different bacteria, domain III forms the AAA+ region, while domain IV binds dsDNA.</text>
</comment>
<comment type="similarity">
    <text evidence="1">Belongs to the DnaA family.</text>
</comment>
<accession>Q8YAW2</accession>
<reference key="1">
    <citation type="journal article" date="2001" name="Science">
        <title>Comparative genomics of Listeria species.</title>
        <authorList>
            <person name="Glaser P."/>
            <person name="Frangeul L."/>
            <person name="Buchrieser C."/>
            <person name="Rusniok C."/>
            <person name="Amend A."/>
            <person name="Baquero F."/>
            <person name="Berche P."/>
            <person name="Bloecker H."/>
            <person name="Brandt P."/>
            <person name="Chakraborty T."/>
            <person name="Charbit A."/>
            <person name="Chetouani F."/>
            <person name="Couve E."/>
            <person name="de Daruvar A."/>
            <person name="Dehoux P."/>
            <person name="Domann E."/>
            <person name="Dominguez-Bernal G."/>
            <person name="Duchaud E."/>
            <person name="Durant L."/>
            <person name="Dussurget O."/>
            <person name="Entian K.-D."/>
            <person name="Fsihi H."/>
            <person name="Garcia-del Portillo F."/>
            <person name="Garrido P."/>
            <person name="Gautier L."/>
            <person name="Goebel W."/>
            <person name="Gomez-Lopez N."/>
            <person name="Hain T."/>
            <person name="Hauf J."/>
            <person name="Jackson D."/>
            <person name="Jones L.-M."/>
            <person name="Kaerst U."/>
            <person name="Kreft J."/>
            <person name="Kuhn M."/>
            <person name="Kunst F."/>
            <person name="Kurapkat G."/>
            <person name="Madueno E."/>
            <person name="Maitournam A."/>
            <person name="Mata Vicente J."/>
            <person name="Ng E."/>
            <person name="Nedjari H."/>
            <person name="Nordsiek G."/>
            <person name="Novella S."/>
            <person name="de Pablos B."/>
            <person name="Perez-Diaz J.-C."/>
            <person name="Purcell R."/>
            <person name="Remmel B."/>
            <person name="Rose M."/>
            <person name="Schlueter T."/>
            <person name="Simoes N."/>
            <person name="Tierrez A."/>
            <person name="Vazquez-Boland J.-A."/>
            <person name="Voss H."/>
            <person name="Wehland J."/>
            <person name="Cossart P."/>
        </authorList>
    </citation>
    <scope>NUCLEOTIDE SEQUENCE [LARGE SCALE GENOMIC DNA]</scope>
    <source>
        <strain>ATCC BAA-679 / EGD-e</strain>
    </source>
</reference>
<reference key="2">
    <citation type="journal article" date="2021" name="Nucleic Acids Res.">
        <title>Evidence for a chromosome origin unwinding system broadly conserved in bacteria.</title>
        <authorList>
            <person name="Pelliciari S."/>
            <person name="Dong M.J."/>
            <person name="Gao F."/>
            <person name="Murray H."/>
        </authorList>
    </citation>
    <scope>FUNCTION</scope>
    <scope>ATP-BINDING</scope>
</reference>
<organism>
    <name type="scientific">Listeria monocytogenes serovar 1/2a (strain ATCC BAA-679 / EGD-e)</name>
    <dbReference type="NCBI Taxonomy" id="169963"/>
    <lineage>
        <taxon>Bacteria</taxon>
        <taxon>Bacillati</taxon>
        <taxon>Bacillota</taxon>
        <taxon>Bacilli</taxon>
        <taxon>Bacillales</taxon>
        <taxon>Listeriaceae</taxon>
        <taxon>Listeria</taxon>
    </lineage>
</organism>
<name>DNAA_LISMO</name>
<proteinExistence type="evidence at protein level"/>
<evidence type="ECO:0000255" key="1">
    <source>
        <dbReference type="HAMAP-Rule" id="MF_00377"/>
    </source>
</evidence>
<evidence type="ECO:0000269" key="2">
    <source>
    </source>
</evidence>
<sequence>MQSIEDIWQETLQIVKKNMSKPSYDTWMKSTTAHSLEGNTFIISAPNNFVRDWLEKSYTQFIANILQEITGRLFDVRFIDGEQEENFEYTVIKPNPALDEDGIEIGKHMLNPRYVFDTFVIGSGNRFAHAASLAVAEAPAKAYNPLFIYGGVGLGKTHLMHAVGHYVQQHKDNAKVMYLSSEKFTNEFISSIRDNKTEEFRTKYRNVDVLLIDDIQFLAGKEGTQEEFFHTFNTLYDEQKQIIISSDRPPKEIPTLEDRLRSRFEWGLITDITPPDLETRIAILRKKAKADGLDIPNEVMLYIANQIDSNIRELEGALIRVVAYSSLVNKDITAGLAAEALKDIIPSSKSQVITISGIQEAVGEYFHVRLEDFKAKKRTKSIAFPRQIAMYLSRELTDASLPKIGDEFGGRDHTTVIHAHEKISQLLKTDQVLKNDLAEIEKNLRKAQNMF</sequence>
<gene>
    <name evidence="1" type="primary">dnaA</name>
    <name type="ordered locus">lmo0001</name>
</gene>
<protein>
    <recommendedName>
        <fullName evidence="1">Chromosomal replication initiator protein DnaA</fullName>
    </recommendedName>
</protein>
<keyword id="KW-0067">ATP-binding</keyword>
<keyword id="KW-0963">Cytoplasm</keyword>
<keyword id="KW-0235">DNA replication</keyword>
<keyword id="KW-0238">DNA-binding</keyword>
<keyword id="KW-0446">Lipid-binding</keyword>
<keyword id="KW-0547">Nucleotide-binding</keyword>
<keyword id="KW-1185">Reference proteome</keyword>
<dbReference type="EMBL" id="AL591973">
    <property type="protein sequence ID" value="CAC98216.1"/>
    <property type="molecule type" value="Genomic_DNA"/>
</dbReference>
<dbReference type="PIR" id="AB1432">
    <property type="entry name" value="AB1432"/>
</dbReference>
<dbReference type="RefSeq" id="NP_463534.1">
    <property type="nucleotide sequence ID" value="NC_003210.1"/>
</dbReference>
<dbReference type="RefSeq" id="WP_003727573.1">
    <property type="nucleotide sequence ID" value="NZ_CP149495.1"/>
</dbReference>
<dbReference type="SMR" id="Q8YAW2"/>
<dbReference type="STRING" id="169963.gene:17592636"/>
<dbReference type="PaxDb" id="169963-lmo0001"/>
<dbReference type="EnsemblBacteria" id="CAC98216">
    <property type="protein sequence ID" value="CAC98216"/>
    <property type="gene ID" value="CAC98216"/>
</dbReference>
<dbReference type="GeneID" id="93237900"/>
<dbReference type="GeneID" id="984365"/>
<dbReference type="KEGG" id="lmo:lmo0001"/>
<dbReference type="PATRIC" id="fig|169963.11.peg.1"/>
<dbReference type="eggNOG" id="COG0593">
    <property type="taxonomic scope" value="Bacteria"/>
</dbReference>
<dbReference type="HOGENOM" id="CLU_026910_3_1_9"/>
<dbReference type="OrthoDB" id="9807019at2"/>
<dbReference type="PhylomeDB" id="Q8YAW2"/>
<dbReference type="BioCyc" id="LMON169963:LMO0001-MONOMER"/>
<dbReference type="Proteomes" id="UP000000817">
    <property type="component" value="Chromosome"/>
</dbReference>
<dbReference type="GO" id="GO:0005737">
    <property type="term" value="C:cytoplasm"/>
    <property type="evidence" value="ECO:0007669"/>
    <property type="project" value="UniProtKB-SubCell"/>
</dbReference>
<dbReference type="GO" id="GO:0005886">
    <property type="term" value="C:plasma membrane"/>
    <property type="evidence" value="ECO:0000318"/>
    <property type="project" value="GO_Central"/>
</dbReference>
<dbReference type="GO" id="GO:0005524">
    <property type="term" value="F:ATP binding"/>
    <property type="evidence" value="ECO:0007669"/>
    <property type="project" value="UniProtKB-UniRule"/>
</dbReference>
<dbReference type="GO" id="GO:0016887">
    <property type="term" value="F:ATP hydrolysis activity"/>
    <property type="evidence" value="ECO:0007669"/>
    <property type="project" value="InterPro"/>
</dbReference>
<dbReference type="GO" id="GO:0003688">
    <property type="term" value="F:DNA replication origin binding"/>
    <property type="evidence" value="ECO:0000318"/>
    <property type="project" value="GO_Central"/>
</dbReference>
<dbReference type="GO" id="GO:0008289">
    <property type="term" value="F:lipid binding"/>
    <property type="evidence" value="ECO:0007669"/>
    <property type="project" value="UniProtKB-KW"/>
</dbReference>
<dbReference type="GO" id="GO:0006260">
    <property type="term" value="P:DNA replication"/>
    <property type="evidence" value="ECO:0000318"/>
    <property type="project" value="GO_Central"/>
</dbReference>
<dbReference type="GO" id="GO:0006270">
    <property type="term" value="P:DNA replication initiation"/>
    <property type="evidence" value="ECO:0000318"/>
    <property type="project" value="GO_Central"/>
</dbReference>
<dbReference type="GO" id="GO:0006275">
    <property type="term" value="P:regulation of DNA replication"/>
    <property type="evidence" value="ECO:0007669"/>
    <property type="project" value="UniProtKB-UniRule"/>
</dbReference>
<dbReference type="CDD" id="cd00009">
    <property type="entry name" value="AAA"/>
    <property type="match status" value="1"/>
</dbReference>
<dbReference type="CDD" id="cd06571">
    <property type="entry name" value="Bac_DnaA_C"/>
    <property type="match status" value="1"/>
</dbReference>
<dbReference type="FunFam" id="1.10.1750.10:FF:000003">
    <property type="entry name" value="Chromosomal replication initiator protein DnaA"/>
    <property type="match status" value="1"/>
</dbReference>
<dbReference type="FunFam" id="1.10.8.60:FF:000003">
    <property type="entry name" value="Chromosomal replication initiator protein DnaA"/>
    <property type="match status" value="1"/>
</dbReference>
<dbReference type="FunFam" id="3.40.50.300:FF:000150">
    <property type="entry name" value="Chromosomal replication initiator protein DnaA"/>
    <property type="match status" value="1"/>
</dbReference>
<dbReference type="Gene3D" id="1.10.1750.10">
    <property type="match status" value="1"/>
</dbReference>
<dbReference type="Gene3D" id="1.10.8.60">
    <property type="match status" value="1"/>
</dbReference>
<dbReference type="Gene3D" id="3.30.300.180">
    <property type="match status" value="1"/>
</dbReference>
<dbReference type="Gene3D" id="3.40.50.300">
    <property type="entry name" value="P-loop containing nucleotide triphosphate hydrolases"/>
    <property type="match status" value="1"/>
</dbReference>
<dbReference type="HAMAP" id="MF_00377">
    <property type="entry name" value="DnaA_bact"/>
    <property type="match status" value="1"/>
</dbReference>
<dbReference type="InterPro" id="IPR003593">
    <property type="entry name" value="AAA+_ATPase"/>
</dbReference>
<dbReference type="InterPro" id="IPR001957">
    <property type="entry name" value="Chromosome_initiator_DnaA"/>
</dbReference>
<dbReference type="InterPro" id="IPR020591">
    <property type="entry name" value="Chromosome_initiator_DnaA-like"/>
</dbReference>
<dbReference type="InterPro" id="IPR018312">
    <property type="entry name" value="Chromosome_initiator_DnaA_CS"/>
</dbReference>
<dbReference type="InterPro" id="IPR013159">
    <property type="entry name" value="DnaA_C"/>
</dbReference>
<dbReference type="InterPro" id="IPR013317">
    <property type="entry name" value="DnaA_dom"/>
</dbReference>
<dbReference type="InterPro" id="IPR024633">
    <property type="entry name" value="DnaA_N_dom"/>
</dbReference>
<dbReference type="InterPro" id="IPR038454">
    <property type="entry name" value="DnaA_N_sf"/>
</dbReference>
<dbReference type="InterPro" id="IPR027417">
    <property type="entry name" value="P-loop_NTPase"/>
</dbReference>
<dbReference type="InterPro" id="IPR010921">
    <property type="entry name" value="Trp_repressor/repl_initiator"/>
</dbReference>
<dbReference type="NCBIfam" id="TIGR00362">
    <property type="entry name" value="DnaA"/>
    <property type="match status" value="1"/>
</dbReference>
<dbReference type="NCBIfam" id="NF010686">
    <property type="entry name" value="PRK14086.1"/>
    <property type="match status" value="1"/>
</dbReference>
<dbReference type="PANTHER" id="PTHR30050">
    <property type="entry name" value="CHROMOSOMAL REPLICATION INITIATOR PROTEIN DNAA"/>
    <property type="match status" value="1"/>
</dbReference>
<dbReference type="PANTHER" id="PTHR30050:SF2">
    <property type="entry name" value="CHROMOSOMAL REPLICATION INITIATOR PROTEIN DNAA"/>
    <property type="match status" value="1"/>
</dbReference>
<dbReference type="Pfam" id="PF00308">
    <property type="entry name" value="Bac_DnaA"/>
    <property type="match status" value="1"/>
</dbReference>
<dbReference type="Pfam" id="PF08299">
    <property type="entry name" value="Bac_DnaA_C"/>
    <property type="match status" value="1"/>
</dbReference>
<dbReference type="Pfam" id="PF11638">
    <property type="entry name" value="DnaA_N"/>
    <property type="match status" value="1"/>
</dbReference>
<dbReference type="PRINTS" id="PR00051">
    <property type="entry name" value="DNAA"/>
</dbReference>
<dbReference type="SMART" id="SM00382">
    <property type="entry name" value="AAA"/>
    <property type="match status" value="1"/>
</dbReference>
<dbReference type="SMART" id="SM00760">
    <property type="entry name" value="Bac_DnaA_C"/>
    <property type="match status" value="1"/>
</dbReference>
<dbReference type="SUPFAM" id="SSF52540">
    <property type="entry name" value="P-loop containing nucleoside triphosphate hydrolases"/>
    <property type="match status" value="1"/>
</dbReference>
<dbReference type="SUPFAM" id="SSF48295">
    <property type="entry name" value="TrpR-like"/>
    <property type="match status" value="1"/>
</dbReference>
<dbReference type="PROSITE" id="PS01008">
    <property type="entry name" value="DNAA"/>
    <property type="match status" value="1"/>
</dbReference>